<reference key="1">
    <citation type="journal article" date="1997" name="Yeast">
        <title>Sequence analysis of a 10.5 kb DNA fragment from the yeast chromosome VII reveals the presence of three new open reading frames and of a tRNAThr gene.</title>
        <authorList>
            <person name="Mazzoni C."/>
            <person name="Ruzzi M."/>
            <person name="Rinaldi T."/>
            <person name="Solinas F."/>
            <person name="Montebove F."/>
            <person name="Frontali L."/>
        </authorList>
    </citation>
    <scope>NUCLEOTIDE SEQUENCE [GENOMIC DNA]</scope>
    <source>
        <strain>ATCC 204508 / S288c</strain>
    </source>
</reference>
<reference key="2">
    <citation type="journal article" date="1997" name="Nature">
        <title>The nucleotide sequence of Saccharomyces cerevisiae chromosome VII.</title>
        <authorList>
            <person name="Tettelin H."/>
            <person name="Agostoni-Carbone M.L."/>
            <person name="Albermann K."/>
            <person name="Albers M."/>
            <person name="Arroyo J."/>
            <person name="Backes U."/>
            <person name="Barreiros T."/>
            <person name="Bertani I."/>
            <person name="Bjourson A.J."/>
            <person name="Brueckner M."/>
            <person name="Bruschi C.V."/>
            <person name="Carignani G."/>
            <person name="Castagnoli L."/>
            <person name="Cerdan E."/>
            <person name="Clemente M.L."/>
            <person name="Coblenz A."/>
            <person name="Coglievina M."/>
            <person name="Coissac E."/>
            <person name="Defoor E."/>
            <person name="Del Bino S."/>
            <person name="Delius H."/>
            <person name="Delneri D."/>
            <person name="de Wergifosse P."/>
            <person name="Dujon B."/>
            <person name="Durand P."/>
            <person name="Entian K.-D."/>
            <person name="Eraso P."/>
            <person name="Escribano V."/>
            <person name="Fabiani L."/>
            <person name="Fartmann B."/>
            <person name="Feroli F."/>
            <person name="Feuermann M."/>
            <person name="Frontali L."/>
            <person name="Garcia-Gonzalez M."/>
            <person name="Garcia-Saez M.I."/>
            <person name="Goffeau A."/>
            <person name="Guerreiro P."/>
            <person name="Hani J."/>
            <person name="Hansen M."/>
            <person name="Hebling U."/>
            <person name="Hernandez K."/>
            <person name="Heumann K."/>
            <person name="Hilger F."/>
            <person name="Hofmann B."/>
            <person name="Indge K.J."/>
            <person name="James C.M."/>
            <person name="Klima R."/>
            <person name="Koetter P."/>
            <person name="Kramer B."/>
            <person name="Kramer W."/>
            <person name="Lauquin G."/>
            <person name="Leuther H."/>
            <person name="Louis E.J."/>
            <person name="Maillier E."/>
            <person name="Marconi A."/>
            <person name="Martegani E."/>
            <person name="Mazon M.J."/>
            <person name="Mazzoni C."/>
            <person name="McReynolds A.D.K."/>
            <person name="Melchioretto P."/>
            <person name="Mewes H.-W."/>
            <person name="Minenkova O."/>
            <person name="Mueller-Auer S."/>
            <person name="Nawrocki A."/>
            <person name="Netter P."/>
            <person name="Neu R."/>
            <person name="Nombela C."/>
            <person name="Oliver S.G."/>
            <person name="Panzeri L."/>
            <person name="Paoluzi S."/>
            <person name="Plevani P."/>
            <person name="Portetelle D."/>
            <person name="Portillo F."/>
            <person name="Potier S."/>
            <person name="Purnelle B."/>
            <person name="Rieger M."/>
            <person name="Riles L."/>
            <person name="Rinaldi T."/>
            <person name="Robben J."/>
            <person name="Rodrigues-Pousada C."/>
            <person name="Rodriguez-Belmonte E."/>
            <person name="Rodriguez-Torres A.M."/>
            <person name="Rose M."/>
            <person name="Ruzzi M."/>
            <person name="Saliola M."/>
            <person name="Sanchez-Perez M."/>
            <person name="Schaefer B."/>
            <person name="Schaefer M."/>
            <person name="Scharfe M."/>
            <person name="Schmidheini T."/>
            <person name="Schreer A."/>
            <person name="Skala J."/>
            <person name="Souciet J.-L."/>
            <person name="Steensma H.Y."/>
            <person name="Talla E."/>
            <person name="Thierry A."/>
            <person name="Vandenbol M."/>
            <person name="van der Aart Q.J.M."/>
            <person name="Van Dyck L."/>
            <person name="Vanoni M."/>
            <person name="Verhasselt P."/>
            <person name="Voet M."/>
            <person name="Volckaert G."/>
            <person name="Wambutt R."/>
            <person name="Watson M.D."/>
            <person name="Weber N."/>
            <person name="Wedler E."/>
            <person name="Wedler H."/>
            <person name="Wipfli P."/>
            <person name="Wolf K."/>
            <person name="Wright L.F."/>
            <person name="Zaccaria P."/>
            <person name="Zimmermann M."/>
            <person name="Zollner A."/>
            <person name="Kleine K."/>
        </authorList>
    </citation>
    <scope>NUCLEOTIDE SEQUENCE [LARGE SCALE GENOMIC DNA]</scope>
    <source>
        <strain>ATCC 204508 / S288c</strain>
    </source>
</reference>
<reference key="3">
    <citation type="journal article" date="2014" name="G3 (Bethesda)">
        <title>The reference genome sequence of Saccharomyces cerevisiae: Then and now.</title>
        <authorList>
            <person name="Engel S.R."/>
            <person name="Dietrich F.S."/>
            <person name="Fisk D.G."/>
            <person name="Binkley G."/>
            <person name="Balakrishnan R."/>
            <person name="Costanzo M.C."/>
            <person name="Dwight S.S."/>
            <person name="Hitz B.C."/>
            <person name="Karra K."/>
            <person name="Nash R.S."/>
            <person name="Weng S."/>
            <person name="Wong E.D."/>
            <person name="Lloyd P."/>
            <person name="Skrzypek M.S."/>
            <person name="Miyasato S.R."/>
            <person name="Simison M."/>
            <person name="Cherry J.M."/>
        </authorList>
    </citation>
    <scope>GENOME REANNOTATION</scope>
    <source>
        <strain>ATCC 204508 / S288c</strain>
    </source>
</reference>
<reference key="4">
    <citation type="journal article" date="2003" name="Nature">
        <title>Global analysis of protein expression in yeast.</title>
        <authorList>
            <person name="Ghaemmaghami S."/>
            <person name="Huh W.-K."/>
            <person name="Bower K."/>
            <person name="Howson R.W."/>
            <person name="Belle A."/>
            <person name="Dephoure N."/>
            <person name="O'Shea E.K."/>
            <person name="Weissman J.S."/>
        </authorList>
    </citation>
    <scope>LEVEL OF PROTEIN EXPRESSION [LARGE SCALE ANALYSIS]</scope>
</reference>
<reference key="5">
    <citation type="journal article" date="2003" name="Proc. Natl. Acad. Sci. U.S.A.">
        <title>Manganese activation of superoxide dismutase 2 in Saccharomyces cerevisiae requires MTM1, a member of the mitochondrial carrier family.</title>
        <authorList>
            <person name="Luk E."/>
            <person name="Carroll M."/>
            <person name="Baker M."/>
            <person name="Culotta V.C."/>
        </authorList>
    </citation>
    <scope>FUNCTION</scope>
    <scope>SUBCELLULAR LOCATION</scope>
    <scope>DISRUPTION PHENOTYPE</scope>
</reference>
<reference key="6">
    <citation type="journal article" date="2006" name="EMBO J.">
        <title>The effects of mitochondrial iron homeostasis on cofactor specificity of superoxide dismutase 2.</title>
        <authorList>
            <person name="Yang M."/>
            <person name="Cobine P.A."/>
            <person name="Molik S."/>
            <person name="Naranuntarat A."/>
            <person name="Lill R."/>
            <person name="Winge D.R."/>
            <person name="Culotta V.C."/>
        </authorList>
    </citation>
    <scope>DISRUPTION PHENOTYPE</scope>
</reference>
<reference key="7">
    <citation type="journal article" date="2008" name="J. Biol. Chem.">
        <title>Identification of FRA1 and FRA2 as genes involved in regulating the yeast iron regulon in response to decreased mitochondrial iron-sulfur cluster synthesis.</title>
        <authorList>
            <person name="Kumanovics A."/>
            <person name="Chen O.S."/>
            <person name="Li L."/>
            <person name="Bagley D."/>
            <person name="Adkins E.M."/>
            <person name="Lin H."/>
            <person name="Dingra N.N."/>
            <person name="Outten C.E."/>
            <person name="Keller G."/>
            <person name="Winge D."/>
            <person name="Ward D.M."/>
            <person name="Kaplan J."/>
        </authorList>
    </citation>
    <scope>FUNCTION</scope>
</reference>
<reference key="8">
    <citation type="journal article" date="2008" name="Mol. Cells">
        <title>Transcriptional response according to strength of calorie restriction in Saccharomyces cerevisiae.</title>
        <authorList>
            <person name="Lee Y.-L."/>
            <person name="Lee C.-K."/>
        </authorList>
    </citation>
    <scope>FUNCTION</scope>
</reference>
<proteinExistence type="evidence at protein level"/>
<organism>
    <name type="scientific">Saccharomyces cerevisiae (strain ATCC 204508 / S288c)</name>
    <name type="common">Baker's yeast</name>
    <dbReference type="NCBI Taxonomy" id="559292"/>
    <lineage>
        <taxon>Eukaryota</taxon>
        <taxon>Fungi</taxon>
        <taxon>Dikarya</taxon>
        <taxon>Ascomycota</taxon>
        <taxon>Saccharomycotina</taxon>
        <taxon>Saccharomycetes</taxon>
        <taxon>Saccharomycetales</taxon>
        <taxon>Saccharomycetaceae</taxon>
        <taxon>Saccharomyces</taxon>
    </lineage>
</organism>
<name>MTM1_YEAST</name>
<protein>
    <recommendedName>
        <fullName>Mitochondrial carrier protein MTM1</fullName>
    </recommendedName>
    <alternativeName>
        <fullName>Manganese trafficking factor for mitochondrial SOD2</fullName>
    </alternativeName>
</protein>
<feature type="chain" id="PRO_0000090697" description="Mitochondrial carrier protein MTM1">
    <location>
        <begin position="1"/>
        <end position="366"/>
    </location>
</feature>
<feature type="transmembrane region" description="Helical; Name=1" evidence="1">
    <location>
        <begin position="17"/>
        <end position="36"/>
    </location>
</feature>
<feature type="transmembrane region" description="Helical; Name=2" evidence="1">
    <location>
        <begin position="126"/>
        <end position="146"/>
    </location>
</feature>
<feature type="transmembrane region" description="Helical; Name=3" evidence="1">
    <location>
        <begin position="162"/>
        <end position="182"/>
    </location>
</feature>
<feature type="transmembrane region" description="Helical; Name=4" evidence="1">
    <location>
        <begin position="229"/>
        <end position="249"/>
    </location>
</feature>
<feature type="transmembrane region" description="Helical; Name=5" evidence="1">
    <location>
        <begin position="268"/>
        <end position="286"/>
    </location>
</feature>
<feature type="transmembrane region" description="Helical; Name=6" evidence="1">
    <location>
        <begin position="331"/>
        <end position="352"/>
    </location>
</feature>
<feature type="repeat" description="Solcar 1">
    <location>
        <begin position="14"/>
        <end position="149"/>
    </location>
</feature>
<feature type="repeat" description="Solcar 2">
    <location>
        <begin position="156"/>
        <end position="250"/>
    </location>
</feature>
<feature type="repeat" description="Solcar 3">
    <location>
        <begin position="266"/>
        <end position="359"/>
    </location>
</feature>
<evidence type="ECO:0000255" key="1"/>
<evidence type="ECO:0000269" key="2">
    <source>
    </source>
</evidence>
<evidence type="ECO:0000269" key="3">
    <source>
    </source>
</evidence>
<evidence type="ECO:0000269" key="4">
    <source>
    </source>
</evidence>
<evidence type="ECO:0000269" key="5">
    <source>
    </source>
</evidence>
<evidence type="ECO:0000269" key="6">
    <source>
    </source>
</evidence>
<evidence type="ECO:0000305" key="7"/>
<keyword id="KW-0472">Membrane</keyword>
<keyword id="KW-0496">Mitochondrion</keyword>
<keyword id="KW-0999">Mitochondrion inner membrane</keyword>
<keyword id="KW-1185">Reference proteome</keyword>
<keyword id="KW-0677">Repeat</keyword>
<keyword id="KW-0812">Transmembrane</keyword>
<keyword id="KW-1133">Transmembrane helix</keyword>
<keyword id="KW-0813">Transport</keyword>
<comment type="function">
    <text evidence="2 5 6">Involved in the mitochondrial activation of SOD2 by specifically facilitating insertion of the essential manganese cofactor. Has the ability to activate iron regulon in an iron-dependent manner. Responds to calorie restriction (CR) strength.</text>
</comment>
<comment type="subcellular location">
    <subcellularLocation>
        <location evidence="7">Mitochondrion inner membrane</location>
        <topology evidence="7">Multi-pass membrane protein</topology>
    </subcellularLocation>
</comment>
<comment type="disruption phenotype">
    <text evidence="2 4">Loss of mitochondrial manganese superoxide dismutase SOD2 activity due to misincorporation of iron into SOD2 rather than manganese. Normal SOD2 activity when in association with YFH1 deletion. Doesn't impair activity of a cytosolic version of manganese SOD. The iron regulatory transcription factor AFT1 is constitutively active. Accumulates mtDNA mutations. Elevated mitochondrial iron and manganese levels.</text>
</comment>
<comment type="miscellaneous">
    <text evidence="3">Present with 538 molecules/cell in log phase SD medium.</text>
</comment>
<comment type="similarity">
    <text evidence="7">Belongs to the mitochondrial carrier (TC 2.A.29) family.</text>
</comment>
<dbReference type="EMBL" id="X99228">
    <property type="protein sequence ID" value="CAA67613.1"/>
    <property type="molecule type" value="Genomic_DNA"/>
</dbReference>
<dbReference type="EMBL" id="Z73042">
    <property type="protein sequence ID" value="CAA97286.1"/>
    <property type="molecule type" value="Genomic_DNA"/>
</dbReference>
<dbReference type="EMBL" id="BK006941">
    <property type="protein sequence ID" value="DAA08348.1"/>
    <property type="molecule type" value="Genomic_DNA"/>
</dbReference>
<dbReference type="PIR" id="S64589">
    <property type="entry name" value="S64589"/>
</dbReference>
<dbReference type="RefSeq" id="NP_011773.3">
    <property type="nucleotide sequence ID" value="NM_001181386.3"/>
</dbReference>
<dbReference type="SMR" id="P53320"/>
<dbReference type="BioGRID" id="33509">
    <property type="interactions" value="75"/>
</dbReference>
<dbReference type="DIP" id="DIP-5452N"/>
<dbReference type="FunCoup" id="P53320">
    <property type="interactions" value="1022"/>
</dbReference>
<dbReference type="IntAct" id="P53320">
    <property type="interactions" value="13"/>
</dbReference>
<dbReference type="MINT" id="P53320"/>
<dbReference type="STRING" id="4932.YGR257C"/>
<dbReference type="iPTMnet" id="P53320"/>
<dbReference type="PaxDb" id="4932-YGR257C"/>
<dbReference type="PeptideAtlas" id="P53320"/>
<dbReference type="EnsemblFungi" id="YGR257C_mRNA">
    <property type="protein sequence ID" value="YGR257C"/>
    <property type="gene ID" value="YGR257C"/>
</dbReference>
<dbReference type="GeneID" id="853173"/>
<dbReference type="KEGG" id="sce:YGR257C"/>
<dbReference type="AGR" id="SGD:S000003489"/>
<dbReference type="SGD" id="S000003489">
    <property type="gene designation" value="MTM1"/>
</dbReference>
<dbReference type="VEuPathDB" id="FungiDB:YGR257C"/>
<dbReference type="eggNOG" id="KOG0761">
    <property type="taxonomic scope" value="Eukaryota"/>
</dbReference>
<dbReference type="GeneTree" id="ENSGT00940000167433"/>
<dbReference type="HOGENOM" id="CLU_015166_0_0_1"/>
<dbReference type="InParanoid" id="P53320"/>
<dbReference type="OMA" id="YWWGYES"/>
<dbReference type="OrthoDB" id="1747031at2759"/>
<dbReference type="BioCyc" id="YEAST:G3O-30927-MONOMER"/>
<dbReference type="BioGRID-ORCS" id="853173">
    <property type="hits" value="8 hits in 10 CRISPR screens"/>
</dbReference>
<dbReference type="PRO" id="PR:P53320"/>
<dbReference type="Proteomes" id="UP000002311">
    <property type="component" value="Chromosome VII"/>
</dbReference>
<dbReference type="RNAct" id="P53320">
    <property type="molecule type" value="protein"/>
</dbReference>
<dbReference type="GO" id="GO:0005743">
    <property type="term" value="C:mitochondrial inner membrane"/>
    <property type="evidence" value="ECO:0007669"/>
    <property type="project" value="UniProtKB-SubCell"/>
</dbReference>
<dbReference type="GO" id="GO:0005739">
    <property type="term" value="C:mitochondrion"/>
    <property type="evidence" value="ECO:0000314"/>
    <property type="project" value="SGD"/>
</dbReference>
<dbReference type="GO" id="GO:0030170">
    <property type="term" value="F:pyridoxal phosphate binding"/>
    <property type="evidence" value="ECO:0000314"/>
    <property type="project" value="SGD"/>
</dbReference>
<dbReference type="GO" id="GO:0170036">
    <property type="term" value="P:import into the mitochondrion"/>
    <property type="evidence" value="ECO:0000318"/>
    <property type="project" value="GO_Central"/>
</dbReference>
<dbReference type="GO" id="GO:0006879">
    <property type="term" value="P:intracellular iron ion homeostasis"/>
    <property type="evidence" value="ECO:0000315"/>
    <property type="project" value="SGD"/>
</dbReference>
<dbReference type="GO" id="GO:0031921">
    <property type="term" value="P:pyridoxal phosphate transport"/>
    <property type="evidence" value="ECO:0000315"/>
    <property type="project" value="SGD"/>
</dbReference>
<dbReference type="FunFam" id="1.50.40.10:FF:000141">
    <property type="entry name" value="Mitochondrial carrier protein MTM1"/>
    <property type="match status" value="1"/>
</dbReference>
<dbReference type="Gene3D" id="1.50.40.10">
    <property type="entry name" value="Mitochondrial carrier domain"/>
    <property type="match status" value="2"/>
</dbReference>
<dbReference type="InterPro" id="IPR018108">
    <property type="entry name" value="Mitochondrial_sb/sol_carrier"/>
</dbReference>
<dbReference type="InterPro" id="IPR023395">
    <property type="entry name" value="Mt_carrier_dom_sf"/>
</dbReference>
<dbReference type="InterPro" id="IPR045315">
    <property type="entry name" value="Mtm1-like"/>
</dbReference>
<dbReference type="PANTHER" id="PTHR45760">
    <property type="entry name" value="FI19922P1-RELATED"/>
    <property type="match status" value="1"/>
</dbReference>
<dbReference type="PANTHER" id="PTHR45760:SF2">
    <property type="entry name" value="FI19922P1-RELATED"/>
    <property type="match status" value="1"/>
</dbReference>
<dbReference type="Pfam" id="PF00153">
    <property type="entry name" value="Mito_carr"/>
    <property type="match status" value="3"/>
</dbReference>
<dbReference type="SUPFAM" id="SSF103506">
    <property type="entry name" value="Mitochondrial carrier"/>
    <property type="match status" value="1"/>
</dbReference>
<dbReference type="PROSITE" id="PS50920">
    <property type="entry name" value="SOLCAR"/>
    <property type="match status" value="3"/>
</dbReference>
<sequence>MSDRNTSNSLTLKERMLSAGAGSVLTSLILTPMDVVRIRLQQQQMIPDCSCDGAAEVPNAVSSGSKMKTFTNVGGQNLNNAKIFWESACFQELHCKNSSLKFNGTLEAFTKIASVEGITSLWRGISLTLLMAIPANMVYFSGYEYIRDVSPIASTYPTLNPLFCGAIARVFAATSIAPLELVKTKLQSIPRSSKSTKTWMMVKDLLNETRQEMKMVGPSRALFKGLEITLWRDVPFSAIYWSSYELCKERLWLDSTRFASKDANWVHFINSFASGCISGMIAAICTHPFDVGKTRWQISMMNNSDPKGGNRSRNMFKFLETIWRTEGLAALYTGLAARVIKIRPSCAIMISSYEISKKVFGNKLHQ</sequence>
<accession>P53320</accession>
<accession>D6VV37</accession>
<gene>
    <name type="primary">MTM1</name>
    <name type="ordered locus">YGR257C</name>
    <name type="ORF">G9175</name>
</gene>